<evidence type="ECO:0000255" key="1">
    <source>
        <dbReference type="HAMAP-Rule" id="MF_01017"/>
    </source>
</evidence>
<comment type="catalytic activity">
    <reaction evidence="1">
        <text>a quinone + NADH + H(+) = a quinol + NAD(+)</text>
        <dbReference type="Rhea" id="RHEA:46160"/>
        <dbReference type="ChEBI" id="CHEBI:15378"/>
        <dbReference type="ChEBI" id="CHEBI:24646"/>
        <dbReference type="ChEBI" id="CHEBI:57540"/>
        <dbReference type="ChEBI" id="CHEBI:57945"/>
        <dbReference type="ChEBI" id="CHEBI:132124"/>
        <dbReference type="EC" id="1.6.5.2"/>
    </reaction>
</comment>
<comment type="catalytic activity">
    <reaction evidence="1">
        <text>a quinone + NADPH + H(+) = a quinol + NADP(+)</text>
        <dbReference type="Rhea" id="RHEA:46164"/>
        <dbReference type="ChEBI" id="CHEBI:15378"/>
        <dbReference type="ChEBI" id="CHEBI:24646"/>
        <dbReference type="ChEBI" id="CHEBI:57783"/>
        <dbReference type="ChEBI" id="CHEBI:58349"/>
        <dbReference type="ChEBI" id="CHEBI:132124"/>
        <dbReference type="EC" id="1.6.5.2"/>
    </reaction>
</comment>
<comment type="cofactor">
    <cofactor evidence="1">
        <name>FMN</name>
        <dbReference type="ChEBI" id="CHEBI:58210"/>
    </cofactor>
    <text evidence="1">Binds 1 FMN per monomer.</text>
</comment>
<comment type="similarity">
    <text evidence="1">Belongs to the WrbA family.</text>
</comment>
<protein>
    <recommendedName>
        <fullName evidence="1">NAD(P)H dehydrogenase (quinone)</fullName>
        <ecNumber evidence="1">1.6.5.2</ecNumber>
    </recommendedName>
    <alternativeName>
        <fullName>Flavoprotein WrbA</fullName>
    </alternativeName>
    <alternativeName>
        <fullName evidence="1">NAD(P)H:quinone oxidoreductase</fullName>
        <shortName evidence="1">NQO</shortName>
    </alternativeName>
</protein>
<feature type="chain" id="PRO_1000200650" description="NAD(P)H dehydrogenase (quinone)">
    <location>
        <begin position="1"/>
        <end position="199"/>
    </location>
</feature>
<feature type="domain" description="Flavodoxin-like" evidence="1">
    <location>
        <begin position="4"/>
        <end position="190"/>
    </location>
</feature>
<feature type="binding site" evidence="1">
    <location>
        <begin position="10"/>
        <end position="15"/>
    </location>
    <ligand>
        <name>FMN</name>
        <dbReference type="ChEBI" id="CHEBI:58210"/>
    </ligand>
</feature>
<feature type="binding site" evidence="1">
    <location>
        <position position="12"/>
    </location>
    <ligand>
        <name>NAD(+)</name>
        <dbReference type="ChEBI" id="CHEBI:57540"/>
    </ligand>
</feature>
<feature type="binding site" evidence="1">
    <location>
        <begin position="79"/>
        <end position="81"/>
    </location>
    <ligand>
        <name>FMN</name>
        <dbReference type="ChEBI" id="CHEBI:58210"/>
    </ligand>
</feature>
<feature type="binding site" evidence="1">
    <location>
        <position position="99"/>
    </location>
    <ligand>
        <name>substrate</name>
    </ligand>
</feature>
<feature type="binding site" evidence="1">
    <location>
        <begin position="114"/>
        <end position="119"/>
    </location>
    <ligand>
        <name>FMN</name>
        <dbReference type="ChEBI" id="CHEBI:58210"/>
    </ligand>
</feature>
<feature type="binding site" evidence="1">
    <location>
        <position position="134"/>
    </location>
    <ligand>
        <name>FMN</name>
        <dbReference type="ChEBI" id="CHEBI:58210"/>
    </ligand>
</feature>
<name>NQOR_YERPB</name>
<organism>
    <name type="scientific">Yersinia pseudotuberculosis serotype IB (strain PB1/+)</name>
    <dbReference type="NCBI Taxonomy" id="502801"/>
    <lineage>
        <taxon>Bacteria</taxon>
        <taxon>Pseudomonadati</taxon>
        <taxon>Pseudomonadota</taxon>
        <taxon>Gammaproteobacteria</taxon>
        <taxon>Enterobacterales</taxon>
        <taxon>Yersiniaceae</taxon>
        <taxon>Yersinia</taxon>
    </lineage>
</organism>
<proteinExistence type="inferred from homology"/>
<sequence length="199" mass="20808">MAKILVLYYSMYGHIETLAGAIAEGARKVSGVDVTIKRVPETMPAEAFAKAGGKTNQQAPVATPHELADYDGIIFGTPTRFGNMSGQMRTFLDQTGGLWASGALYGKVASVFASTGTGGGQEHTITSTWTTLAHHGFIIVPIGYGAKELFDVSQTRGGTPYGATTIAGGDGSRQPSAEELAIARFQGEHVAKITAKLKG</sequence>
<gene>
    <name type="ordered locus">YPTS_1860</name>
</gene>
<dbReference type="EC" id="1.6.5.2" evidence="1"/>
<dbReference type="EMBL" id="CP001048">
    <property type="protein sequence ID" value="ACC88827.1"/>
    <property type="molecule type" value="Genomic_DNA"/>
</dbReference>
<dbReference type="SMR" id="B2K198"/>
<dbReference type="KEGG" id="ypb:YPTS_1860"/>
<dbReference type="PATRIC" id="fig|502801.10.peg.1240"/>
<dbReference type="GO" id="GO:0016020">
    <property type="term" value="C:membrane"/>
    <property type="evidence" value="ECO:0007669"/>
    <property type="project" value="TreeGrafter"/>
</dbReference>
<dbReference type="GO" id="GO:0050660">
    <property type="term" value="F:flavin adenine dinucleotide binding"/>
    <property type="evidence" value="ECO:0007669"/>
    <property type="project" value="UniProtKB-UniRule"/>
</dbReference>
<dbReference type="GO" id="GO:0010181">
    <property type="term" value="F:FMN binding"/>
    <property type="evidence" value="ECO:0007669"/>
    <property type="project" value="InterPro"/>
</dbReference>
<dbReference type="GO" id="GO:0051287">
    <property type="term" value="F:NAD binding"/>
    <property type="evidence" value="ECO:0007669"/>
    <property type="project" value="UniProtKB-UniRule"/>
</dbReference>
<dbReference type="GO" id="GO:0050136">
    <property type="term" value="F:NADH:ubiquinone reductase (non-electrogenic) activity"/>
    <property type="evidence" value="ECO:0007669"/>
    <property type="project" value="RHEA"/>
</dbReference>
<dbReference type="GO" id="GO:0050661">
    <property type="term" value="F:NADP binding"/>
    <property type="evidence" value="ECO:0007669"/>
    <property type="project" value="UniProtKB-UniRule"/>
</dbReference>
<dbReference type="GO" id="GO:0008753">
    <property type="term" value="F:NADPH dehydrogenase (quinone) activity"/>
    <property type="evidence" value="ECO:0007669"/>
    <property type="project" value="RHEA"/>
</dbReference>
<dbReference type="FunFam" id="3.40.50.360:FF:000004">
    <property type="entry name" value="NAD(P)H dehydrogenase (quinone)"/>
    <property type="match status" value="1"/>
</dbReference>
<dbReference type="Gene3D" id="3.40.50.360">
    <property type="match status" value="1"/>
</dbReference>
<dbReference type="HAMAP" id="MF_01017">
    <property type="entry name" value="NQOR"/>
    <property type="match status" value="1"/>
</dbReference>
<dbReference type="InterPro" id="IPR008254">
    <property type="entry name" value="Flavodoxin/NO_synth"/>
</dbReference>
<dbReference type="InterPro" id="IPR029039">
    <property type="entry name" value="Flavoprotein-like_sf"/>
</dbReference>
<dbReference type="InterPro" id="IPR010089">
    <property type="entry name" value="Flavoprotein_WrbA-like"/>
</dbReference>
<dbReference type="InterPro" id="IPR005025">
    <property type="entry name" value="FMN_Rdtase-like_dom"/>
</dbReference>
<dbReference type="InterPro" id="IPR037513">
    <property type="entry name" value="NQO"/>
</dbReference>
<dbReference type="NCBIfam" id="TIGR01755">
    <property type="entry name" value="flav_wrbA"/>
    <property type="match status" value="1"/>
</dbReference>
<dbReference type="NCBIfam" id="NF002999">
    <property type="entry name" value="PRK03767.1"/>
    <property type="match status" value="1"/>
</dbReference>
<dbReference type="PANTHER" id="PTHR30546">
    <property type="entry name" value="FLAVODOXIN-RELATED PROTEIN WRBA-RELATED"/>
    <property type="match status" value="1"/>
</dbReference>
<dbReference type="PANTHER" id="PTHR30546:SF23">
    <property type="entry name" value="FLAVOPROTEIN-LIKE PROTEIN YCP4-RELATED"/>
    <property type="match status" value="1"/>
</dbReference>
<dbReference type="Pfam" id="PF03358">
    <property type="entry name" value="FMN_red"/>
    <property type="match status" value="1"/>
</dbReference>
<dbReference type="SUPFAM" id="SSF52218">
    <property type="entry name" value="Flavoproteins"/>
    <property type="match status" value="1"/>
</dbReference>
<dbReference type="PROSITE" id="PS50902">
    <property type="entry name" value="FLAVODOXIN_LIKE"/>
    <property type="match status" value="1"/>
</dbReference>
<accession>B2K198</accession>
<reference key="1">
    <citation type="submission" date="2008-04" db="EMBL/GenBank/DDBJ databases">
        <title>Complete sequence of Yersinia pseudotuberculosis PB1/+.</title>
        <authorList>
            <person name="Copeland A."/>
            <person name="Lucas S."/>
            <person name="Lapidus A."/>
            <person name="Glavina del Rio T."/>
            <person name="Dalin E."/>
            <person name="Tice H."/>
            <person name="Bruce D."/>
            <person name="Goodwin L."/>
            <person name="Pitluck S."/>
            <person name="Munk A.C."/>
            <person name="Brettin T."/>
            <person name="Detter J.C."/>
            <person name="Han C."/>
            <person name="Tapia R."/>
            <person name="Schmutz J."/>
            <person name="Larimer F."/>
            <person name="Land M."/>
            <person name="Hauser L."/>
            <person name="Challacombe J.F."/>
            <person name="Green L."/>
            <person name="Lindler L.E."/>
            <person name="Nikolich M.P."/>
            <person name="Richardson P."/>
        </authorList>
    </citation>
    <scope>NUCLEOTIDE SEQUENCE [LARGE SCALE GENOMIC DNA]</scope>
    <source>
        <strain>PB1/+</strain>
    </source>
</reference>
<keyword id="KW-0285">Flavoprotein</keyword>
<keyword id="KW-0288">FMN</keyword>
<keyword id="KW-0520">NAD</keyword>
<keyword id="KW-0521">NADP</keyword>
<keyword id="KW-0547">Nucleotide-binding</keyword>
<keyword id="KW-0560">Oxidoreductase</keyword>